<comment type="function">
    <text evidence="1">Provides the (R)-glutamate required for cell wall biosynthesis.</text>
</comment>
<comment type="catalytic activity">
    <reaction evidence="1">
        <text>L-glutamate = D-glutamate</text>
        <dbReference type="Rhea" id="RHEA:12813"/>
        <dbReference type="ChEBI" id="CHEBI:29985"/>
        <dbReference type="ChEBI" id="CHEBI:29986"/>
        <dbReference type="EC" id="5.1.1.3"/>
    </reaction>
</comment>
<comment type="pathway">
    <text evidence="1">Cell wall biogenesis; peptidoglycan biosynthesis.</text>
</comment>
<comment type="similarity">
    <text evidence="1">Belongs to the aspartate/glutamate racemases family.</text>
</comment>
<evidence type="ECO:0000255" key="1">
    <source>
        <dbReference type="HAMAP-Rule" id="MF_00258"/>
    </source>
</evidence>
<name>MURI_BACP2</name>
<feature type="chain" id="PRO_1000059065" description="Glutamate racemase">
    <location>
        <begin position="1"/>
        <end position="272"/>
    </location>
</feature>
<feature type="active site" description="Proton donor/acceptor" evidence="1">
    <location>
        <position position="74"/>
    </location>
</feature>
<feature type="active site" description="Proton donor/acceptor" evidence="1">
    <location>
        <position position="185"/>
    </location>
</feature>
<feature type="binding site" evidence="1">
    <location>
        <begin position="10"/>
        <end position="11"/>
    </location>
    <ligand>
        <name>substrate</name>
    </ligand>
</feature>
<feature type="binding site" evidence="1">
    <location>
        <begin position="42"/>
        <end position="43"/>
    </location>
    <ligand>
        <name>substrate</name>
    </ligand>
</feature>
<feature type="binding site" evidence="1">
    <location>
        <begin position="75"/>
        <end position="76"/>
    </location>
    <ligand>
        <name>substrate</name>
    </ligand>
</feature>
<feature type="binding site" evidence="1">
    <location>
        <begin position="186"/>
        <end position="187"/>
    </location>
    <ligand>
        <name>substrate</name>
    </ligand>
</feature>
<reference key="1">
    <citation type="journal article" date="2007" name="PLoS ONE">
        <title>Paradoxical DNA repair and peroxide resistance gene conservation in Bacillus pumilus SAFR-032.</title>
        <authorList>
            <person name="Gioia J."/>
            <person name="Yerrapragada S."/>
            <person name="Qin X."/>
            <person name="Jiang H."/>
            <person name="Igboeli O.C."/>
            <person name="Muzny D."/>
            <person name="Dugan-Rocha S."/>
            <person name="Ding Y."/>
            <person name="Hawes A."/>
            <person name="Liu W."/>
            <person name="Perez L."/>
            <person name="Kovar C."/>
            <person name="Dinh H."/>
            <person name="Lee S."/>
            <person name="Nazareth L."/>
            <person name="Blyth P."/>
            <person name="Holder M."/>
            <person name="Buhay C."/>
            <person name="Tirumalai M.R."/>
            <person name="Liu Y."/>
            <person name="Dasgupta I."/>
            <person name="Bokhetache L."/>
            <person name="Fujita M."/>
            <person name="Karouia F."/>
            <person name="Eswara Moorthy P."/>
            <person name="Siefert J."/>
            <person name="Uzman A."/>
            <person name="Buzumbo P."/>
            <person name="Verma A."/>
            <person name="Zwiya H."/>
            <person name="McWilliams B.D."/>
            <person name="Olowu A."/>
            <person name="Clinkenbeard K.D."/>
            <person name="Newcombe D."/>
            <person name="Golebiewski L."/>
            <person name="Petrosino J.F."/>
            <person name="Nicholson W.L."/>
            <person name="Fox G.E."/>
            <person name="Venkateswaran K."/>
            <person name="Highlander S.K."/>
            <person name="Weinstock G.M."/>
        </authorList>
    </citation>
    <scope>NUCLEOTIDE SEQUENCE [LARGE SCALE GENOMIC DNA]</scope>
    <source>
        <strain>SAFR-032</strain>
    </source>
</reference>
<protein>
    <recommendedName>
        <fullName evidence="1">Glutamate racemase</fullName>
        <ecNumber evidence="1">5.1.1.3</ecNumber>
    </recommendedName>
</protein>
<keyword id="KW-0133">Cell shape</keyword>
<keyword id="KW-0961">Cell wall biogenesis/degradation</keyword>
<keyword id="KW-0413">Isomerase</keyword>
<keyword id="KW-0573">Peptidoglycan synthesis</keyword>
<gene>
    <name evidence="1" type="primary">murI</name>
    <name type="ordered locus">BPUM_2493</name>
</gene>
<organism>
    <name type="scientific">Bacillus pumilus (strain SAFR-032)</name>
    <dbReference type="NCBI Taxonomy" id="315750"/>
    <lineage>
        <taxon>Bacteria</taxon>
        <taxon>Bacillati</taxon>
        <taxon>Bacillota</taxon>
        <taxon>Bacilli</taxon>
        <taxon>Bacillales</taxon>
        <taxon>Bacillaceae</taxon>
        <taxon>Bacillus</taxon>
    </lineage>
</organism>
<accession>A8FFY8</accession>
<sequence length="272" mass="29948">MLDQPIGVIDSGVGGLTVAKEIMRQLPKEKIIYVGDTKRCPYGPRKEEEVLQYTWEMAHYLLRHHHIKMLVIACNTATAIALDEIKATLDIPVIGVIQPGARTAIKVTNNQQIGVIGTANTIKSEAYKEALLSLKAGLAVQSLACPLLVPFVESGTFLDQTADEVVKDSLEPMKETGIDTLILGCTHYPILKESIQRFMGSDVSIISSGDETAREASTILSYKGLLNTSQEAPVHTFYTTGQQQNFENIARDWFGYLPGKVETVSLEHVYQQ</sequence>
<dbReference type="EC" id="5.1.1.3" evidence="1"/>
<dbReference type="EMBL" id="CP000813">
    <property type="protein sequence ID" value="ABV63155.1"/>
    <property type="molecule type" value="Genomic_DNA"/>
</dbReference>
<dbReference type="SMR" id="A8FFY8"/>
<dbReference type="STRING" id="315750.BPUM_2493"/>
<dbReference type="KEGG" id="bpu:BPUM_2493"/>
<dbReference type="eggNOG" id="COG0796">
    <property type="taxonomic scope" value="Bacteria"/>
</dbReference>
<dbReference type="HOGENOM" id="CLU_052344_0_2_9"/>
<dbReference type="OrthoDB" id="9801055at2"/>
<dbReference type="UniPathway" id="UPA00219"/>
<dbReference type="Proteomes" id="UP000001355">
    <property type="component" value="Chromosome"/>
</dbReference>
<dbReference type="GO" id="GO:0008881">
    <property type="term" value="F:glutamate racemase activity"/>
    <property type="evidence" value="ECO:0007669"/>
    <property type="project" value="UniProtKB-UniRule"/>
</dbReference>
<dbReference type="GO" id="GO:0071555">
    <property type="term" value="P:cell wall organization"/>
    <property type="evidence" value="ECO:0007669"/>
    <property type="project" value="UniProtKB-KW"/>
</dbReference>
<dbReference type="GO" id="GO:0009252">
    <property type="term" value="P:peptidoglycan biosynthetic process"/>
    <property type="evidence" value="ECO:0007669"/>
    <property type="project" value="UniProtKB-UniRule"/>
</dbReference>
<dbReference type="GO" id="GO:0008360">
    <property type="term" value="P:regulation of cell shape"/>
    <property type="evidence" value="ECO:0007669"/>
    <property type="project" value="UniProtKB-KW"/>
</dbReference>
<dbReference type="FunFam" id="3.40.50.1860:FF:000002">
    <property type="entry name" value="Glutamate racemase"/>
    <property type="match status" value="1"/>
</dbReference>
<dbReference type="Gene3D" id="3.40.50.1860">
    <property type="match status" value="2"/>
</dbReference>
<dbReference type="HAMAP" id="MF_00258">
    <property type="entry name" value="Glu_racemase"/>
    <property type="match status" value="1"/>
</dbReference>
<dbReference type="InterPro" id="IPR015942">
    <property type="entry name" value="Asp/Glu/hydantoin_racemase"/>
</dbReference>
<dbReference type="InterPro" id="IPR001920">
    <property type="entry name" value="Asp/Glu_race"/>
</dbReference>
<dbReference type="InterPro" id="IPR018187">
    <property type="entry name" value="Asp/Glu_racemase_AS_1"/>
</dbReference>
<dbReference type="InterPro" id="IPR033134">
    <property type="entry name" value="Asp/Glu_racemase_AS_2"/>
</dbReference>
<dbReference type="InterPro" id="IPR004391">
    <property type="entry name" value="Glu_race"/>
</dbReference>
<dbReference type="NCBIfam" id="TIGR00067">
    <property type="entry name" value="glut_race"/>
    <property type="match status" value="1"/>
</dbReference>
<dbReference type="NCBIfam" id="NF002035">
    <property type="entry name" value="PRK00865.1-3"/>
    <property type="match status" value="1"/>
</dbReference>
<dbReference type="PANTHER" id="PTHR21198">
    <property type="entry name" value="GLUTAMATE RACEMASE"/>
    <property type="match status" value="1"/>
</dbReference>
<dbReference type="PANTHER" id="PTHR21198:SF2">
    <property type="entry name" value="GLUTAMATE RACEMASE"/>
    <property type="match status" value="1"/>
</dbReference>
<dbReference type="Pfam" id="PF01177">
    <property type="entry name" value="Asp_Glu_race"/>
    <property type="match status" value="1"/>
</dbReference>
<dbReference type="SUPFAM" id="SSF53681">
    <property type="entry name" value="Aspartate/glutamate racemase"/>
    <property type="match status" value="2"/>
</dbReference>
<dbReference type="PROSITE" id="PS00923">
    <property type="entry name" value="ASP_GLU_RACEMASE_1"/>
    <property type="match status" value="1"/>
</dbReference>
<dbReference type="PROSITE" id="PS00924">
    <property type="entry name" value="ASP_GLU_RACEMASE_2"/>
    <property type="match status" value="1"/>
</dbReference>
<proteinExistence type="inferred from homology"/>